<comment type="function">
    <text evidence="1">Catalyzes the formation of S-adenosylmethionine (AdoMet) from methionine and ATP. The overall synthetic reaction is composed of two sequential steps, AdoMet formation and the subsequent tripolyphosphate hydrolysis which occurs prior to release of AdoMet from the enzyme.</text>
</comment>
<comment type="catalytic activity">
    <reaction evidence="1">
        <text>L-methionine + ATP + H2O = S-adenosyl-L-methionine + phosphate + diphosphate</text>
        <dbReference type="Rhea" id="RHEA:21080"/>
        <dbReference type="ChEBI" id="CHEBI:15377"/>
        <dbReference type="ChEBI" id="CHEBI:30616"/>
        <dbReference type="ChEBI" id="CHEBI:33019"/>
        <dbReference type="ChEBI" id="CHEBI:43474"/>
        <dbReference type="ChEBI" id="CHEBI:57844"/>
        <dbReference type="ChEBI" id="CHEBI:59789"/>
        <dbReference type="EC" id="2.5.1.6"/>
    </reaction>
</comment>
<comment type="cofactor">
    <cofactor evidence="1">
        <name>Mg(2+)</name>
        <dbReference type="ChEBI" id="CHEBI:18420"/>
    </cofactor>
    <text evidence="1">Binds 2 divalent ions per subunit.</text>
</comment>
<comment type="cofactor">
    <cofactor evidence="1">
        <name>K(+)</name>
        <dbReference type="ChEBI" id="CHEBI:29103"/>
    </cofactor>
    <text evidence="1">Binds 1 potassium ion per subunit.</text>
</comment>
<comment type="pathway">
    <text evidence="1">Amino-acid biosynthesis; S-adenosyl-L-methionine biosynthesis; S-adenosyl-L-methionine from L-methionine: step 1/1.</text>
</comment>
<comment type="subunit">
    <text evidence="1">Homotetramer; dimer of dimers.</text>
</comment>
<comment type="subcellular location">
    <subcellularLocation>
        <location evidence="1">Cytoplasm</location>
    </subcellularLocation>
</comment>
<comment type="similarity">
    <text evidence="1">Belongs to the AdoMet synthase family.</text>
</comment>
<reference key="1">
    <citation type="journal article" date="2006" name="Nat. Biotechnol.">
        <title>Genome sequence of the ubiquitous hydrocarbon-degrading marine bacterium Alcanivorax borkumensis.</title>
        <authorList>
            <person name="Schneiker S."/>
            <person name="Martins dos Santos V.A.P."/>
            <person name="Bartels D."/>
            <person name="Bekel T."/>
            <person name="Brecht M."/>
            <person name="Buhrmester J."/>
            <person name="Chernikova T.N."/>
            <person name="Denaro R."/>
            <person name="Ferrer M."/>
            <person name="Gertler C."/>
            <person name="Goesmann A."/>
            <person name="Golyshina O.V."/>
            <person name="Kaminski F."/>
            <person name="Khachane A.N."/>
            <person name="Lang S."/>
            <person name="Linke B."/>
            <person name="McHardy A.C."/>
            <person name="Meyer F."/>
            <person name="Nechitaylo T."/>
            <person name="Puehler A."/>
            <person name="Regenhardt D."/>
            <person name="Rupp O."/>
            <person name="Sabirova J.S."/>
            <person name="Selbitschka W."/>
            <person name="Yakimov M.M."/>
            <person name="Timmis K.N."/>
            <person name="Vorhoelter F.-J."/>
            <person name="Weidner S."/>
            <person name="Kaiser O."/>
            <person name="Golyshin P.N."/>
        </authorList>
    </citation>
    <scope>NUCLEOTIDE SEQUENCE [LARGE SCALE GENOMIC DNA]</scope>
    <source>
        <strain>ATCC 700651 / DSM 11573 / NCIMB 13689 / SK2</strain>
    </source>
</reference>
<feature type="chain" id="PRO_0000302891" description="S-adenosylmethionine synthase">
    <location>
        <begin position="1"/>
        <end position="382"/>
    </location>
</feature>
<feature type="region of interest" description="Flexible loop" evidence="1">
    <location>
        <begin position="100"/>
        <end position="110"/>
    </location>
</feature>
<feature type="binding site" description="in other chain" evidence="1">
    <location>
        <position position="16"/>
    </location>
    <ligand>
        <name>ATP</name>
        <dbReference type="ChEBI" id="CHEBI:30616"/>
        <note>ligand shared between two neighboring subunits</note>
    </ligand>
</feature>
<feature type="binding site" evidence="1">
    <location>
        <position position="18"/>
    </location>
    <ligand>
        <name>Mg(2+)</name>
        <dbReference type="ChEBI" id="CHEBI:18420"/>
    </ligand>
</feature>
<feature type="binding site" evidence="1">
    <location>
        <position position="44"/>
    </location>
    <ligand>
        <name>K(+)</name>
        <dbReference type="ChEBI" id="CHEBI:29103"/>
    </ligand>
</feature>
<feature type="binding site" description="in other chain" evidence="1">
    <location>
        <position position="57"/>
    </location>
    <ligand>
        <name>L-methionine</name>
        <dbReference type="ChEBI" id="CHEBI:57844"/>
        <note>ligand shared between two neighboring subunits</note>
    </ligand>
</feature>
<feature type="binding site" description="in other chain" evidence="1">
    <location>
        <position position="100"/>
    </location>
    <ligand>
        <name>L-methionine</name>
        <dbReference type="ChEBI" id="CHEBI:57844"/>
        <note>ligand shared between two neighboring subunits</note>
    </ligand>
</feature>
<feature type="binding site" description="in other chain" evidence="1">
    <location>
        <begin position="165"/>
        <end position="167"/>
    </location>
    <ligand>
        <name>ATP</name>
        <dbReference type="ChEBI" id="CHEBI:30616"/>
        <note>ligand shared between two neighboring subunits</note>
    </ligand>
</feature>
<feature type="binding site" evidence="1">
    <location>
        <position position="240"/>
    </location>
    <ligand>
        <name>ATP</name>
        <dbReference type="ChEBI" id="CHEBI:30616"/>
        <note>ligand shared between two neighboring subunits</note>
    </ligand>
</feature>
<feature type="binding site" evidence="1">
    <location>
        <position position="240"/>
    </location>
    <ligand>
        <name>L-methionine</name>
        <dbReference type="ChEBI" id="CHEBI:57844"/>
        <note>ligand shared between two neighboring subunits</note>
    </ligand>
</feature>
<feature type="binding site" description="in other chain" evidence="1">
    <location>
        <begin position="246"/>
        <end position="247"/>
    </location>
    <ligand>
        <name>ATP</name>
        <dbReference type="ChEBI" id="CHEBI:30616"/>
        <note>ligand shared between two neighboring subunits</note>
    </ligand>
</feature>
<feature type="binding site" evidence="1">
    <location>
        <position position="263"/>
    </location>
    <ligand>
        <name>ATP</name>
        <dbReference type="ChEBI" id="CHEBI:30616"/>
        <note>ligand shared between two neighboring subunits</note>
    </ligand>
</feature>
<feature type="binding site" evidence="1">
    <location>
        <position position="267"/>
    </location>
    <ligand>
        <name>ATP</name>
        <dbReference type="ChEBI" id="CHEBI:30616"/>
        <note>ligand shared between two neighboring subunits</note>
    </ligand>
</feature>
<feature type="binding site" description="in other chain" evidence="1">
    <location>
        <position position="271"/>
    </location>
    <ligand>
        <name>L-methionine</name>
        <dbReference type="ChEBI" id="CHEBI:57844"/>
        <note>ligand shared between two neighboring subunits</note>
    </ligand>
</feature>
<evidence type="ECO:0000255" key="1">
    <source>
        <dbReference type="HAMAP-Rule" id="MF_00086"/>
    </source>
</evidence>
<sequence>MSEYSIFTSESVSEGHPDKMADQISDAILDAIIKDDPHARVAVETMVKTGMAVVAGEVRTNTYVELEDIVRQVILDIGYDSSEKGFDGASCAVLNGIGKQSADIAIGVDEAEEKEMGAGDQGLMFGFATDETDTLMPAPVYYSHRLVERQAKLRKNSTLPWLRPDAKSQVTLRYDNGKPVAVDAVVLSTQHSPDIKLADLREAVMEEIIKPVLPEEWLHKDTLYHVNPTGIFVIGGPMGDCGLTGRKIIVDTYGGMARHGGGAFSGKDPSKVDRSAAYAGRYVAKNIVAAGLASKCEIQVSYAIGVAEPTSISVNTFGTGKISDSAIVDLVREHFDLRPRGIIEMLDLRKPIYRPTASYGHFGREGFSWEKTDKTEALKAAL</sequence>
<keyword id="KW-0067">ATP-binding</keyword>
<keyword id="KW-0963">Cytoplasm</keyword>
<keyword id="KW-0460">Magnesium</keyword>
<keyword id="KW-0479">Metal-binding</keyword>
<keyword id="KW-0547">Nucleotide-binding</keyword>
<keyword id="KW-0554">One-carbon metabolism</keyword>
<keyword id="KW-0630">Potassium</keyword>
<keyword id="KW-1185">Reference proteome</keyword>
<keyword id="KW-0808">Transferase</keyword>
<dbReference type="EC" id="2.5.1.6" evidence="1"/>
<dbReference type="EMBL" id="AM286690">
    <property type="protein sequence ID" value="CAL18065.1"/>
    <property type="molecule type" value="Genomic_DNA"/>
</dbReference>
<dbReference type="RefSeq" id="WP_011589888.1">
    <property type="nucleotide sequence ID" value="NC_008260.1"/>
</dbReference>
<dbReference type="SMR" id="Q0VL83"/>
<dbReference type="STRING" id="393595.ABO_2617"/>
<dbReference type="KEGG" id="abo:ABO_2617"/>
<dbReference type="eggNOG" id="COG0192">
    <property type="taxonomic scope" value="Bacteria"/>
</dbReference>
<dbReference type="HOGENOM" id="CLU_041802_1_1_6"/>
<dbReference type="OrthoDB" id="9801686at2"/>
<dbReference type="UniPathway" id="UPA00315">
    <property type="reaction ID" value="UER00080"/>
</dbReference>
<dbReference type="Proteomes" id="UP000008871">
    <property type="component" value="Chromosome"/>
</dbReference>
<dbReference type="GO" id="GO:0005737">
    <property type="term" value="C:cytoplasm"/>
    <property type="evidence" value="ECO:0007669"/>
    <property type="project" value="UniProtKB-SubCell"/>
</dbReference>
<dbReference type="GO" id="GO:0005524">
    <property type="term" value="F:ATP binding"/>
    <property type="evidence" value="ECO:0007669"/>
    <property type="project" value="UniProtKB-UniRule"/>
</dbReference>
<dbReference type="GO" id="GO:0000287">
    <property type="term" value="F:magnesium ion binding"/>
    <property type="evidence" value="ECO:0007669"/>
    <property type="project" value="UniProtKB-UniRule"/>
</dbReference>
<dbReference type="GO" id="GO:0004478">
    <property type="term" value="F:methionine adenosyltransferase activity"/>
    <property type="evidence" value="ECO:0007669"/>
    <property type="project" value="UniProtKB-UniRule"/>
</dbReference>
<dbReference type="GO" id="GO:0006730">
    <property type="term" value="P:one-carbon metabolic process"/>
    <property type="evidence" value="ECO:0007669"/>
    <property type="project" value="UniProtKB-KW"/>
</dbReference>
<dbReference type="GO" id="GO:0006556">
    <property type="term" value="P:S-adenosylmethionine biosynthetic process"/>
    <property type="evidence" value="ECO:0007669"/>
    <property type="project" value="UniProtKB-UniRule"/>
</dbReference>
<dbReference type="CDD" id="cd18079">
    <property type="entry name" value="S-AdoMet_synt"/>
    <property type="match status" value="1"/>
</dbReference>
<dbReference type="FunFam" id="3.30.300.10:FF:000003">
    <property type="entry name" value="S-adenosylmethionine synthase"/>
    <property type="match status" value="1"/>
</dbReference>
<dbReference type="Gene3D" id="3.30.300.10">
    <property type="match status" value="3"/>
</dbReference>
<dbReference type="HAMAP" id="MF_00086">
    <property type="entry name" value="S_AdoMet_synth1"/>
    <property type="match status" value="1"/>
</dbReference>
<dbReference type="InterPro" id="IPR022631">
    <property type="entry name" value="ADOMET_SYNTHASE_CS"/>
</dbReference>
<dbReference type="InterPro" id="IPR022630">
    <property type="entry name" value="S-AdoMet_synt_C"/>
</dbReference>
<dbReference type="InterPro" id="IPR022629">
    <property type="entry name" value="S-AdoMet_synt_central"/>
</dbReference>
<dbReference type="InterPro" id="IPR022628">
    <property type="entry name" value="S-AdoMet_synt_N"/>
</dbReference>
<dbReference type="InterPro" id="IPR002133">
    <property type="entry name" value="S-AdoMet_synthetase"/>
</dbReference>
<dbReference type="InterPro" id="IPR022636">
    <property type="entry name" value="S-AdoMet_synthetase_sfam"/>
</dbReference>
<dbReference type="NCBIfam" id="TIGR01034">
    <property type="entry name" value="metK"/>
    <property type="match status" value="1"/>
</dbReference>
<dbReference type="PANTHER" id="PTHR11964">
    <property type="entry name" value="S-ADENOSYLMETHIONINE SYNTHETASE"/>
    <property type="match status" value="1"/>
</dbReference>
<dbReference type="Pfam" id="PF02773">
    <property type="entry name" value="S-AdoMet_synt_C"/>
    <property type="match status" value="1"/>
</dbReference>
<dbReference type="Pfam" id="PF02772">
    <property type="entry name" value="S-AdoMet_synt_M"/>
    <property type="match status" value="1"/>
</dbReference>
<dbReference type="Pfam" id="PF00438">
    <property type="entry name" value="S-AdoMet_synt_N"/>
    <property type="match status" value="1"/>
</dbReference>
<dbReference type="PIRSF" id="PIRSF000497">
    <property type="entry name" value="MAT"/>
    <property type="match status" value="1"/>
</dbReference>
<dbReference type="SUPFAM" id="SSF55973">
    <property type="entry name" value="S-adenosylmethionine synthetase"/>
    <property type="match status" value="3"/>
</dbReference>
<dbReference type="PROSITE" id="PS00376">
    <property type="entry name" value="ADOMET_SYNTHASE_1"/>
    <property type="match status" value="1"/>
</dbReference>
<dbReference type="PROSITE" id="PS00377">
    <property type="entry name" value="ADOMET_SYNTHASE_2"/>
    <property type="match status" value="1"/>
</dbReference>
<protein>
    <recommendedName>
        <fullName evidence="1">S-adenosylmethionine synthase</fullName>
        <shortName evidence="1">AdoMet synthase</shortName>
        <ecNumber evidence="1">2.5.1.6</ecNumber>
    </recommendedName>
    <alternativeName>
        <fullName evidence="1">MAT</fullName>
    </alternativeName>
    <alternativeName>
        <fullName evidence="1">Methionine adenosyltransferase</fullName>
    </alternativeName>
</protein>
<organism>
    <name type="scientific">Alcanivorax borkumensis (strain ATCC 700651 / DSM 11573 / NCIMB 13689 / SK2)</name>
    <dbReference type="NCBI Taxonomy" id="393595"/>
    <lineage>
        <taxon>Bacteria</taxon>
        <taxon>Pseudomonadati</taxon>
        <taxon>Pseudomonadota</taxon>
        <taxon>Gammaproteobacteria</taxon>
        <taxon>Oceanospirillales</taxon>
        <taxon>Alcanivoracaceae</taxon>
        <taxon>Alcanivorax</taxon>
    </lineage>
</organism>
<accession>Q0VL83</accession>
<name>METK_ALCBS</name>
<gene>
    <name evidence="1" type="primary">metK</name>
    <name type="ordered locus">ABO_2617</name>
</gene>
<proteinExistence type="inferred from homology"/>